<accession>B4RS82</accession>
<accession>F2GCM7</accession>
<dbReference type="EMBL" id="CP001103">
    <property type="protein sequence ID" value="AEB00214.1"/>
    <property type="molecule type" value="Genomic_DNA"/>
</dbReference>
<dbReference type="RefSeq" id="WP_012520217.1">
    <property type="nucleotide sequence ID" value="NC_011138.3"/>
</dbReference>
<dbReference type="SMR" id="B4RS82"/>
<dbReference type="GeneID" id="56344287"/>
<dbReference type="KEGG" id="amc:MADE_1020455"/>
<dbReference type="HOGENOM" id="CLU_050669_0_1_6"/>
<dbReference type="Proteomes" id="UP000001870">
    <property type="component" value="Chromosome"/>
</dbReference>
<dbReference type="GO" id="GO:0005886">
    <property type="term" value="C:plasma membrane"/>
    <property type="evidence" value="ECO:0007669"/>
    <property type="project" value="UniProtKB-SubCell"/>
</dbReference>
<dbReference type="GO" id="GO:0045259">
    <property type="term" value="C:proton-transporting ATP synthase complex"/>
    <property type="evidence" value="ECO:0007669"/>
    <property type="project" value="UniProtKB-KW"/>
</dbReference>
<dbReference type="GO" id="GO:0005524">
    <property type="term" value="F:ATP binding"/>
    <property type="evidence" value="ECO:0007669"/>
    <property type="project" value="UniProtKB-UniRule"/>
</dbReference>
<dbReference type="GO" id="GO:0046933">
    <property type="term" value="F:proton-transporting ATP synthase activity, rotational mechanism"/>
    <property type="evidence" value="ECO:0007669"/>
    <property type="project" value="UniProtKB-UniRule"/>
</dbReference>
<dbReference type="GO" id="GO:0042777">
    <property type="term" value="P:proton motive force-driven plasma membrane ATP synthesis"/>
    <property type="evidence" value="ECO:0007669"/>
    <property type="project" value="UniProtKB-UniRule"/>
</dbReference>
<dbReference type="CDD" id="cd12151">
    <property type="entry name" value="F1-ATPase_gamma"/>
    <property type="match status" value="1"/>
</dbReference>
<dbReference type="FunFam" id="1.10.287.80:FF:000005">
    <property type="entry name" value="ATP synthase gamma chain"/>
    <property type="match status" value="1"/>
</dbReference>
<dbReference type="FunFam" id="3.40.1380.10:FF:000001">
    <property type="entry name" value="ATP synthase gamma chain"/>
    <property type="match status" value="1"/>
</dbReference>
<dbReference type="Gene3D" id="3.40.1380.10">
    <property type="match status" value="1"/>
</dbReference>
<dbReference type="Gene3D" id="1.10.287.80">
    <property type="entry name" value="ATP synthase, gamma subunit, helix hairpin domain"/>
    <property type="match status" value="2"/>
</dbReference>
<dbReference type="HAMAP" id="MF_00815">
    <property type="entry name" value="ATP_synth_gamma_bact"/>
    <property type="match status" value="1"/>
</dbReference>
<dbReference type="InterPro" id="IPR035968">
    <property type="entry name" value="ATP_synth_F1_ATPase_gsu"/>
</dbReference>
<dbReference type="InterPro" id="IPR000131">
    <property type="entry name" value="ATP_synth_F1_gsu"/>
</dbReference>
<dbReference type="InterPro" id="IPR023632">
    <property type="entry name" value="ATP_synth_F1_gsu_CS"/>
</dbReference>
<dbReference type="NCBIfam" id="TIGR01146">
    <property type="entry name" value="ATPsyn_F1gamma"/>
    <property type="match status" value="1"/>
</dbReference>
<dbReference type="NCBIfam" id="NF004144">
    <property type="entry name" value="PRK05621.1-1"/>
    <property type="match status" value="1"/>
</dbReference>
<dbReference type="PANTHER" id="PTHR11693">
    <property type="entry name" value="ATP SYNTHASE GAMMA CHAIN"/>
    <property type="match status" value="1"/>
</dbReference>
<dbReference type="PANTHER" id="PTHR11693:SF22">
    <property type="entry name" value="ATP SYNTHASE SUBUNIT GAMMA, MITOCHONDRIAL"/>
    <property type="match status" value="1"/>
</dbReference>
<dbReference type="Pfam" id="PF00231">
    <property type="entry name" value="ATP-synt"/>
    <property type="match status" value="1"/>
</dbReference>
<dbReference type="PRINTS" id="PR00126">
    <property type="entry name" value="ATPASEGAMMA"/>
</dbReference>
<dbReference type="SUPFAM" id="SSF52943">
    <property type="entry name" value="ATP synthase (F1-ATPase), gamma subunit"/>
    <property type="match status" value="1"/>
</dbReference>
<dbReference type="PROSITE" id="PS00153">
    <property type="entry name" value="ATPASE_GAMMA"/>
    <property type="match status" value="1"/>
</dbReference>
<organism>
    <name type="scientific">Alteromonas mediterranea (strain DSM 17117 / CIP 110805 / LMG 28347 / Deep ecotype)</name>
    <dbReference type="NCBI Taxonomy" id="1774373"/>
    <lineage>
        <taxon>Bacteria</taxon>
        <taxon>Pseudomonadati</taxon>
        <taxon>Pseudomonadota</taxon>
        <taxon>Gammaproteobacteria</taxon>
        <taxon>Alteromonadales</taxon>
        <taxon>Alteromonadaceae</taxon>
        <taxon>Alteromonas/Salinimonas group</taxon>
        <taxon>Alteromonas</taxon>
    </lineage>
</organism>
<gene>
    <name evidence="1" type="primary">atpG</name>
    <name type="ordered locus">MADE_1020455</name>
</gene>
<protein>
    <recommendedName>
        <fullName evidence="1">ATP synthase gamma chain</fullName>
    </recommendedName>
    <alternativeName>
        <fullName evidence="1">ATP synthase F1 sector gamma subunit</fullName>
    </alternativeName>
    <alternativeName>
        <fullName evidence="1">F-ATPase gamma subunit</fullName>
    </alternativeName>
</protein>
<feature type="chain" id="PRO_1000134104" description="ATP synthase gamma chain">
    <location>
        <begin position="1"/>
        <end position="286"/>
    </location>
</feature>
<reference key="1">
    <citation type="journal article" date="2008" name="ISME J.">
        <title>Comparative genomics of two ecotypes of the marine planktonic copiotroph Alteromonas macleodii suggests alternative lifestyles associated with different kinds of particulate organic matter.</title>
        <authorList>
            <person name="Ivars-Martinez E."/>
            <person name="Martin-Cuadrado A.-B."/>
            <person name="D'Auria G."/>
            <person name="Mira A."/>
            <person name="Ferriera S."/>
            <person name="Johnson J."/>
            <person name="Friedman R."/>
            <person name="Rodriguez-Valera F."/>
        </authorList>
    </citation>
    <scope>NUCLEOTIDE SEQUENCE [LARGE SCALE GENOMIC DNA]</scope>
    <source>
        <strain>DSM 17117 / CIP 110805 / LMG 28347 / Deep ecotype</strain>
    </source>
</reference>
<evidence type="ECO:0000255" key="1">
    <source>
        <dbReference type="HAMAP-Rule" id="MF_00815"/>
    </source>
</evidence>
<comment type="function">
    <text evidence="1">Produces ATP from ADP in the presence of a proton gradient across the membrane. The gamma chain is believed to be important in regulating ATPase activity and the flow of protons through the CF(0) complex.</text>
</comment>
<comment type="subunit">
    <text evidence="1">F-type ATPases have 2 components, CF(1) - the catalytic core - and CF(0) - the membrane proton channel. CF(1) has five subunits: alpha(3), beta(3), gamma(1), delta(1), epsilon(1). CF(0) has three main subunits: a, b and c.</text>
</comment>
<comment type="subcellular location">
    <subcellularLocation>
        <location evidence="1">Cell inner membrane</location>
        <topology evidence="1">Peripheral membrane protein</topology>
    </subcellularLocation>
</comment>
<comment type="similarity">
    <text evidence="1">Belongs to the ATPase gamma chain family.</text>
</comment>
<name>ATPG_ALTMD</name>
<keyword id="KW-0066">ATP synthesis</keyword>
<keyword id="KW-0997">Cell inner membrane</keyword>
<keyword id="KW-1003">Cell membrane</keyword>
<keyword id="KW-0139">CF(1)</keyword>
<keyword id="KW-0375">Hydrogen ion transport</keyword>
<keyword id="KW-0406">Ion transport</keyword>
<keyword id="KW-0472">Membrane</keyword>
<keyword id="KW-0813">Transport</keyword>
<proteinExistence type="inferred from homology"/>
<sequence length="286" mass="31747">MASGKEIKGKIGSIKNTQKITSAMEMVAASKMKKAQERMASGRPYAQNMLKVIGHIANGNLEYRHPYLEEREVKRVGYIVISTDRGLCGGLNTNEFKLVTQDVKKWREQGVEVDFAALGSKACSFFNRFGGKLLAAESGLGDKPSVSDVVGVVRVMLKAYDEGQIDRVFLVFNDFVNTMTQKPVINQLLPLPKSEDEEYQHRWDYIYEPDPKEILEALMVRYIESQVYQGVVENAASEQAARMVAMKAATDNAGNLIDELQLVYNKARQAAITQEISEIVSGAAAV</sequence>